<dbReference type="EC" id="6.3.4.5" evidence="1"/>
<dbReference type="EMBL" id="CP001322">
    <property type="protein sequence ID" value="ACL02118.1"/>
    <property type="molecule type" value="Genomic_DNA"/>
</dbReference>
<dbReference type="RefSeq" id="WP_012609558.1">
    <property type="nucleotide sequence ID" value="NC_011768.1"/>
</dbReference>
<dbReference type="SMR" id="B8FH30"/>
<dbReference type="KEGG" id="dal:Dalk_0409"/>
<dbReference type="eggNOG" id="COG0137">
    <property type="taxonomic scope" value="Bacteria"/>
</dbReference>
<dbReference type="HOGENOM" id="CLU_032784_4_2_7"/>
<dbReference type="UniPathway" id="UPA00068">
    <property type="reaction ID" value="UER00113"/>
</dbReference>
<dbReference type="Proteomes" id="UP000000739">
    <property type="component" value="Chromosome"/>
</dbReference>
<dbReference type="GO" id="GO:0005737">
    <property type="term" value="C:cytoplasm"/>
    <property type="evidence" value="ECO:0007669"/>
    <property type="project" value="UniProtKB-SubCell"/>
</dbReference>
<dbReference type="GO" id="GO:0004055">
    <property type="term" value="F:argininosuccinate synthase activity"/>
    <property type="evidence" value="ECO:0007669"/>
    <property type="project" value="UniProtKB-UniRule"/>
</dbReference>
<dbReference type="GO" id="GO:0005524">
    <property type="term" value="F:ATP binding"/>
    <property type="evidence" value="ECO:0007669"/>
    <property type="project" value="UniProtKB-UniRule"/>
</dbReference>
<dbReference type="GO" id="GO:0000053">
    <property type="term" value="P:argininosuccinate metabolic process"/>
    <property type="evidence" value="ECO:0007669"/>
    <property type="project" value="TreeGrafter"/>
</dbReference>
<dbReference type="GO" id="GO:0006526">
    <property type="term" value="P:L-arginine biosynthetic process"/>
    <property type="evidence" value="ECO:0007669"/>
    <property type="project" value="UniProtKB-UniRule"/>
</dbReference>
<dbReference type="GO" id="GO:0000050">
    <property type="term" value="P:urea cycle"/>
    <property type="evidence" value="ECO:0007669"/>
    <property type="project" value="TreeGrafter"/>
</dbReference>
<dbReference type="CDD" id="cd01999">
    <property type="entry name" value="ASS"/>
    <property type="match status" value="1"/>
</dbReference>
<dbReference type="FunFam" id="3.40.50.620:FF:000019">
    <property type="entry name" value="Argininosuccinate synthase"/>
    <property type="match status" value="1"/>
</dbReference>
<dbReference type="FunFam" id="3.90.1260.10:FF:000007">
    <property type="entry name" value="Argininosuccinate synthase"/>
    <property type="match status" value="1"/>
</dbReference>
<dbReference type="Gene3D" id="3.90.1260.10">
    <property type="entry name" value="Argininosuccinate synthetase, chain A, domain 2"/>
    <property type="match status" value="1"/>
</dbReference>
<dbReference type="Gene3D" id="3.40.50.620">
    <property type="entry name" value="HUPs"/>
    <property type="match status" value="1"/>
</dbReference>
<dbReference type="Gene3D" id="1.20.5.470">
    <property type="entry name" value="Single helix bin"/>
    <property type="match status" value="1"/>
</dbReference>
<dbReference type="HAMAP" id="MF_00005">
    <property type="entry name" value="Arg_succ_synth_type1"/>
    <property type="match status" value="1"/>
</dbReference>
<dbReference type="InterPro" id="IPR048268">
    <property type="entry name" value="Arginosuc_syn_C"/>
</dbReference>
<dbReference type="InterPro" id="IPR048267">
    <property type="entry name" value="Arginosuc_syn_N"/>
</dbReference>
<dbReference type="InterPro" id="IPR001518">
    <property type="entry name" value="Arginosuc_synth"/>
</dbReference>
<dbReference type="InterPro" id="IPR018223">
    <property type="entry name" value="Arginosuc_synth_CS"/>
</dbReference>
<dbReference type="InterPro" id="IPR023434">
    <property type="entry name" value="Arginosuc_synth_type_1_subfam"/>
</dbReference>
<dbReference type="InterPro" id="IPR024074">
    <property type="entry name" value="AS_cat/multimer_dom_body"/>
</dbReference>
<dbReference type="InterPro" id="IPR014729">
    <property type="entry name" value="Rossmann-like_a/b/a_fold"/>
</dbReference>
<dbReference type="NCBIfam" id="TIGR00032">
    <property type="entry name" value="argG"/>
    <property type="match status" value="1"/>
</dbReference>
<dbReference type="NCBIfam" id="NF001770">
    <property type="entry name" value="PRK00509.1"/>
    <property type="match status" value="1"/>
</dbReference>
<dbReference type="PANTHER" id="PTHR11587">
    <property type="entry name" value="ARGININOSUCCINATE SYNTHASE"/>
    <property type="match status" value="1"/>
</dbReference>
<dbReference type="PANTHER" id="PTHR11587:SF2">
    <property type="entry name" value="ARGININOSUCCINATE SYNTHASE"/>
    <property type="match status" value="1"/>
</dbReference>
<dbReference type="Pfam" id="PF20979">
    <property type="entry name" value="Arginosuc_syn_C"/>
    <property type="match status" value="1"/>
</dbReference>
<dbReference type="Pfam" id="PF00764">
    <property type="entry name" value="Arginosuc_synth"/>
    <property type="match status" value="1"/>
</dbReference>
<dbReference type="SUPFAM" id="SSF52402">
    <property type="entry name" value="Adenine nucleotide alpha hydrolases-like"/>
    <property type="match status" value="1"/>
</dbReference>
<dbReference type="SUPFAM" id="SSF69864">
    <property type="entry name" value="Argininosuccinate synthetase, C-terminal domain"/>
    <property type="match status" value="1"/>
</dbReference>
<dbReference type="PROSITE" id="PS00564">
    <property type="entry name" value="ARGININOSUCCIN_SYN_1"/>
    <property type="match status" value="1"/>
</dbReference>
<dbReference type="PROSITE" id="PS00565">
    <property type="entry name" value="ARGININOSUCCIN_SYN_2"/>
    <property type="match status" value="1"/>
</dbReference>
<gene>
    <name evidence="1" type="primary">argG</name>
    <name type="ordered locus">Dalk_0409</name>
</gene>
<protein>
    <recommendedName>
        <fullName evidence="1">Argininosuccinate synthase</fullName>
        <ecNumber evidence="1">6.3.4.5</ecNumber>
    </recommendedName>
    <alternativeName>
        <fullName evidence="1">Citrulline--aspartate ligase</fullName>
    </alternativeName>
</protein>
<accession>B8FH30</accession>
<reference key="1">
    <citation type="journal article" date="2012" name="Environ. Microbiol.">
        <title>The genome sequence of Desulfatibacillum alkenivorans AK-01: a blueprint for anaerobic alkane oxidation.</title>
        <authorList>
            <person name="Callaghan A.V."/>
            <person name="Morris B.E."/>
            <person name="Pereira I.A."/>
            <person name="McInerney M.J."/>
            <person name="Austin R.N."/>
            <person name="Groves J.T."/>
            <person name="Kukor J.J."/>
            <person name="Suflita J.M."/>
            <person name="Young L.Y."/>
            <person name="Zylstra G.J."/>
            <person name="Wawrik B."/>
        </authorList>
    </citation>
    <scope>NUCLEOTIDE SEQUENCE [LARGE SCALE GENOMIC DNA]</scope>
    <source>
        <strain>AK-01</strain>
    </source>
</reference>
<proteinExistence type="inferred from homology"/>
<sequence>MGKDIKKVVLAYSGGLDTSVILKWLVETYQCEVVAFSADIGQGEELEPVRGKAEASGACAVYIDDLREEFVKDYVFPAFRANAIYEGQYLLGTSLARPLISKRQMEIAKLEGADAVSHGATGKGNDQVRFELSYLAIDPAIKIIAPWREWDLNSRTKLMAYAEKHGIPVPTTQAKPYSSDRNLLHISFEGGVLEDPWAPPEEDMFVMSVSPQQAPDQPEEVLIQFEQGNPVAVNGEKLSPANLLAKLNELGGKHGVGRMDIVENRFVGMKSRGVYETPGGTILRIAHMNMETLTMDREVAHLRDSLIPKYAELVYNGFWFSPEMKLLQTTIDATQENVCGEVLLELYKGNCRVLGRRSDKSLYRMDFATFEEDEVYRQKDAEGFIRLNSLRLRIQSMMNK</sequence>
<name>ASSY_DESAL</name>
<feature type="chain" id="PRO_1000116190" description="Argininosuccinate synthase">
    <location>
        <begin position="1"/>
        <end position="400"/>
    </location>
</feature>
<feature type="binding site" evidence="1">
    <location>
        <begin position="11"/>
        <end position="19"/>
    </location>
    <ligand>
        <name>ATP</name>
        <dbReference type="ChEBI" id="CHEBI:30616"/>
    </ligand>
</feature>
<feature type="binding site" evidence="1">
    <location>
        <position position="38"/>
    </location>
    <ligand>
        <name>ATP</name>
        <dbReference type="ChEBI" id="CHEBI:30616"/>
    </ligand>
</feature>
<feature type="binding site" evidence="1">
    <location>
        <position position="89"/>
    </location>
    <ligand>
        <name>L-citrulline</name>
        <dbReference type="ChEBI" id="CHEBI:57743"/>
    </ligand>
</feature>
<feature type="binding site" evidence="1">
    <location>
        <position position="94"/>
    </location>
    <ligand>
        <name>L-citrulline</name>
        <dbReference type="ChEBI" id="CHEBI:57743"/>
    </ligand>
</feature>
<feature type="binding site" evidence="1">
    <location>
        <position position="119"/>
    </location>
    <ligand>
        <name>ATP</name>
        <dbReference type="ChEBI" id="CHEBI:30616"/>
    </ligand>
</feature>
<feature type="binding site" evidence="1">
    <location>
        <position position="121"/>
    </location>
    <ligand>
        <name>L-aspartate</name>
        <dbReference type="ChEBI" id="CHEBI:29991"/>
    </ligand>
</feature>
<feature type="binding site" evidence="1">
    <location>
        <position position="125"/>
    </location>
    <ligand>
        <name>L-aspartate</name>
        <dbReference type="ChEBI" id="CHEBI:29991"/>
    </ligand>
</feature>
<feature type="binding site" evidence="1">
    <location>
        <position position="125"/>
    </location>
    <ligand>
        <name>L-citrulline</name>
        <dbReference type="ChEBI" id="CHEBI:57743"/>
    </ligand>
</feature>
<feature type="binding site" evidence="1">
    <location>
        <position position="126"/>
    </location>
    <ligand>
        <name>L-aspartate</name>
        <dbReference type="ChEBI" id="CHEBI:29991"/>
    </ligand>
</feature>
<feature type="binding site" evidence="1">
    <location>
        <position position="129"/>
    </location>
    <ligand>
        <name>L-citrulline</name>
        <dbReference type="ChEBI" id="CHEBI:57743"/>
    </ligand>
</feature>
<feature type="binding site" evidence="1">
    <location>
        <position position="178"/>
    </location>
    <ligand>
        <name>L-citrulline</name>
        <dbReference type="ChEBI" id="CHEBI:57743"/>
    </ligand>
</feature>
<feature type="binding site" evidence="1">
    <location>
        <position position="187"/>
    </location>
    <ligand>
        <name>L-citrulline</name>
        <dbReference type="ChEBI" id="CHEBI:57743"/>
    </ligand>
</feature>
<feature type="binding site" evidence="1">
    <location>
        <position position="263"/>
    </location>
    <ligand>
        <name>L-citrulline</name>
        <dbReference type="ChEBI" id="CHEBI:57743"/>
    </ligand>
</feature>
<feature type="binding site" evidence="1">
    <location>
        <position position="275"/>
    </location>
    <ligand>
        <name>L-citrulline</name>
        <dbReference type="ChEBI" id="CHEBI:57743"/>
    </ligand>
</feature>
<organism>
    <name type="scientific">Desulfatibacillum aliphaticivorans</name>
    <dbReference type="NCBI Taxonomy" id="218208"/>
    <lineage>
        <taxon>Bacteria</taxon>
        <taxon>Pseudomonadati</taxon>
        <taxon>Thermodesulfobacteriota</taxon>
        <taxon>Desulfobacteria</taxon>
        <taxon>Desulfobacterales</taxon>
        <taxon>Desulfatibacillaceae</taxon>
        <taxon>Desulfatibacillum</taxon>
    </lineage>
</organism>
<comment type="catalytic activity">
    <reaction evidence="1">
        <text>L-citrulline + L-aspartate + ATP = 2-(N(omega)-L-arginino)succinate + AMP + diphosphate + H(+)</text>
        <dbReference type="Rhea" id="RHEA:10932"/>
        <dbReference type="ChEBI" id="CHEBI:15378"/>
        <dbReference type="ChEBI" id="CHEBI:29991"/>
        <dbReference type="ChEBI" id="CHEBI:30616"/>
        <dbReference type="ChEBI" id="CHEBI:33019"/>
        <dbReference type="ChEBI" id="CHEBI:57472"/>
        <dbReference type="ChEBI" id="CHEBI:57743"/>
        <dbReference type="ChEBI" id="CHEBI:456215"/>
        <dbReference type="EC" id="6.3.4.5"/>
    </reaction>
</comment>
<comment type="pathway">
    <text evidence="1">Amino-acid biosynthesis; L-arginine biosynthesis; L-arginine from L-ornithine and carbamoyl phosphate: step 2/3.</text>
</comment>
<comment type="subunit">
    <text evidence="1">Homotetramer.</text>
</comment>
<comment type="subcellular location">
    <subcellularLocation>
        <location evidence="1">Cytoplasm</location>
    </subcellularLocation>
</comment>
<comment type="similarity">
    <text evidence="1">Belongs to the argininosuccinate synthase family. Type 1 subfamily.</text>
</comment>
<evidence type="ECO:0000255" key="1">
    <source>
        <dbReference type="HAMAP-Rule" id="MF_00005"/>
    </source>
</evidence>
<keyword id="KW-0028">Amino-acid biosynthesis</keyword>
<keyword id="KW-0055">Arginine biosynthesis</keyword>
<keyword id="KW-0067">ATP-binding</keyword>
<keyword id="KW-0963">Cytoplasm</keyword>
<keyword id="KW-0436">Ligase</keyword>
<keyword id="KW-0547">Nucleotide-binding</keyword>
<keyword id="KW-1185">Reference proteome</keyword>